<evidence type="ECO:0000250" key="1"/>
<evidence type="ECO:0000256" key="2">
    <source>
        <dbReference type="SAM" id="MobiDB-lite"/>
    </source>
</evidence>
<evidence type="ECO:0000305" key="3"/>
<feature type="chain" id="PRO_0000413526" description="Large ribosomal subunit protein eL42">
    <location>
        <begin position="1"/>
        <end position="109"/>
    </location>
</feature>
<feature type="region of interest" description="Disordered" evidence="2">
    <location>
        <begin position="23"/>
        <end position="53"/>
    </location>
</feature>
<feature type="compositionally biased region" description="Basic and acidic residues" evidence="2">
    <location>
        <begin position="28"/>
        <end position="43"/>
    </location>
</feature>
<sequence>MVQVPKTRKTYCKKCNSHTNHKVSQYKKSKESTHAQGRRRYDMKQSGFGGQTKPIFRKKAKTTKKVALKFDCTTCKTKRVIPIKRCKTIVFMDITQIKKAKVNKKDPNW</sequence>
<keyword id="KW-0002">3D-structure</keyword>
<keyword id="KW-0963">Cytoplasm</keyword>
<keyword id="KW-1185">Reference proteome</keyword>
<keyword id="KW-0687">Ribonucleoprotein</keyword>
<keyword id="KW-0689">Ribosomal protein</keyword>
<protein>
    <recommendedName>
        <fullName evidence="3">Large ribosomal subunit protein eL42</fullName>
    </recommendedName>
    <alternativeName>
        <fullName>60S ribosomal protein L36a</fullName>
    </alternativeName>
    <alternativeName>
        <fullName>60S ribosomal protein L44</fullName>
    </alternativeName>
</protein>
<accession>Q22X38</accession>
<reference key="1">
    <citation type="journal article" date="2006" name="PLoS Biol.">
        <title>Macronuclear genome sequence of the ciliate Tetrahymena thermophila, a model eukaryote.</title>
        <authorList>
            <person name="Eisen J.A."/>
            <person name="Coyne R.S."/>
            <person name="Wu M."/>
            <person name="Wu D."/>
            <person name="Thiagarajan M."/>
            <person name="Wortman J.R."/>
            <person name="Badger J.H."/>
            <person name="Ren Q."/>
            <person name="Amedeo P."/>
            <person name="Jones K.M."/>
            <person name="Tallon L.J."/>
            <person name="Delcher A.L."/>
            <person name="Salzberg S.L."/>
            <person name="Silva J.C."/>
            <person name="Haas B.J."/>
            <person name="Majoros W.H."/>
            <person name="Farzad M."/>
            <person name="Carlton J.M."/>
            <person name="Smith R.K. Jr."/>
            <person name="Garg J."/>
            <person name="Pearlman R.E."/>
            <person name="Karrer K.M."/>
            <person name="Sun L."/>
            <person name="Manning G."/>
            <person name="Elde N.C."/>
            <person name="Turkewitz A.P."/>
            <person name="Asai D.J."/>
            <person name="Wilkes D.E."/>
            <person name="Wang Y."/>
            <person name="Cai H."/>
            <person name="Collins K."/>
            <person name="Stewart B.A."/>
            <person name="Lee S.R."/>
            <person name="Wilamowska K."/>
            <person name="Weinberg Z."/>
            <person name="Ruzzo W.L."/>
            <person name="Wloga D."/>
            <person name="Gaertig J."/>
            <person name="Frankel J."/>
            <person name="Tsao C.-C."/>
            <person name="Gorovsky M.A."/>
            <person name="Keeling P.J."/>
            <person name="Waller R.F."/>
            <person name="Patron N.J."/>
            <person name="Cherry J.M."/>
            <person name="Stover N.A."/>
            <person name="Krieger C.J."/>
            <person name="del Toro C."/>
            <person name="Ryder H.F."/>
            <person name="Williamson S.C."/>
            <person name="Barbeau R.A."/>
            <person name="Hamilton E.P."/>
            <person name="Orias E."/>
        </authorList>
    </citation>
    <scope>NUCLEOTIDE SEQUENCE [LARGE SCALE GENOMIC DNA]</scope>
    <source>
        <strain>SB210</strain>
    </source>
</reference>
<dbReference type="EMBL" id="GG662809">
    <property type="protein sequence ID" value="EAR89808.1"/>
    <property type="molecule type" value="Genomic_DNA"/>
</dbReference>
<dbReference type="RefSeq" id="XP_001010053.1">
    <property type="nucleotide sequence ID" value="XM_001010053.3"/>
</dbReference>
<dbReference type="PDB" id="4V8P">
    <property type="method" value="X-ray"/>
    <property type="resolution" value="3.52 A"/>
    <property type="chains" value="AC/DC/FC/HC=1-109"/>
</dbReference>
<dbReference type="PDBsum" id="4V8P"/>
<dbReference type="SMR" id="Q22X38"/>
<dbReference type="FunCoup" id="Q22X38">
    <property type="interactions" value="409"/>
</dbReference>
<dbReference type="IntAct" id="Q22X38">
    <property type="interactions" value="1"/>
</dbReference>
<dbReference type="STRING" id="312017.Q22X38"/>
<dbReference type="EnsemblProtists" id="EAR89808">
    <property type="protein sequence ID" value="EAR89808"/>
    <property type="gene ID" value="TTHERM_00633150"/>
</dbReference>
<dbReference type="GeneID" id="7826206"/>
<dbReference type="KEGG" id="tet:TTHERM_00633150"/>
<dbReference type="eggNOG" id="KOG3464">
    <property type="taxonomic scope" value="Eukaryota"/>
</dbReference>
<dbReference type="HOGENOM" id="CLU_114645_2_1_1"/>
<dbReference type="InParanoid" id="Q22X38"/>
<dbReference type="OMA" id="CKKHTIH"/>
<dbReference type="OrthoDB" id="303731at2759"/>
<dbReference type="Proteomes" id="UP000009168">
    <property type="component" value="Unassembled WGS sequence"/>
</dbReference>
<dbReference type="GO" id="GO:0005737">
    <property type="term" value="C:cytoplasm"/>
    <property type="evidence" value="ECO:0007669"/>
    <property type="project" value="UniProtKB-SubCell"/>
</dbReference>
<dbReference type="GO" id="GO:1990904">
    <property type="term" value="C:ribonucleoprotein complex"/>
    <property type="evidence" value="ECO:0007669"/>
    <property type="project" value="UniProtKB-KW"/>
</dbReference>
<dbReference type="GO" id="GO:0005840">
    <property type="term" value="C:ribosome"/>
    <property type="evidence" value="ECO:0007669"/>
    <property type="project" value="UniProtKB-KW"/>
</dbReference>
<dbReference type="GO" id="GO:0003735">
    <property type="term" value="F:structural constituent of ribosome"/>
    <property type="evidence" value="ECO:0007669"/>
    <property type="project" value="InterPro"/>
</dbReference>
<dbReference type="GO" id="GO:0006412">
    <property type="term" value="P:translation"/>
    <property type="evidence" value="ECO:0007669"/>
    <property type="project" value="InterPro"/>
</dbReference>
<dbReference type="FunFam" id="3.10.450.80:FF:000001">
    <property type="entry name" value="60S ribosomal protein L44"/>
    <property type="match status" value="1"/>
</dbReference>
<dbReference type="Gene3D" id="3.10.450.80">
    <property type="match status" value="1"/>
</dbReference>
<dbReference type="InterPro" id="IPR000552">
    <property type="entry name" value="Ribosomal_eL44"/>
</dbReference>
<dbReference type="InterPro" id="IPR053708">
    <property type="entry name" value="Ribosomal_LSU_eL42"/>
</dbReference>
<dbReference type="InterPro" id="IPR011332">
    <property type="entry name" value="Ribosomal_zn-bd"/>
</dbReference>
<dbReference type="PANTHER" id="PTHR10369">
    <property type="entry name" value="60S RIBOSOMAL PROTEIN L36A/L44"/>
    <property type="match status" value="1"/>
</dbReference>
<dbReference type="Pfam" id="PF00935">
    <property type="entry name" value="Ribosomal_L44"/>
    <property type="match status" value="1"/>
</dbReference>
<dbReference type="SUPFAM" id="SSF57829">
    <property type="entry name" value="Zn-binding ribosomal proteins"/>
    <property type="match status" value="1"/>
</dbReference>
<dbReference type="PROSITE" id="PS01172">
    <property type="entry name" value="RIBOSOMAL_L44E"/>
    <property type="match status" value="1"/>
</dbReference>
<proteinExistence type="evidence at protein level"/>
<comment type="subcellular location">
    <subcellularLocation>
        <location evidence="1">Cytoplasm</location>
    </subcellularLocation>
</comment>
<comment type="similarity">
    <text evidence="3">Belongs to the eukaryotic ribosomal protein eL42 family.</text>
</comment>
<gene>
    <name type="primary">RPL36A</name>
    <name type="synonym">RPL42</name>
    <name type="synonym">RPL44</name>
    <name type="ORF">TTHERM_00633150</name>
</gene>
<name>RL36A_TETTS</name>
<organism>
    <name type="scientific">Tetrahymena thermophila (strain SB210)</name>
    <dbReference type="NCBI Taxonomy" id="312017"/>
    <lineage>
        <taxon>Eukaryota</taxon>
        <taxon>Sar</taxon>
        <taxon>Alveolata</taxon>
        <taxon>Ciliophora</taxon>
        <taxon>Intramacronucleata</taxon>
        <taxon>Oligohymenophorea</taxon>
        <taxon>Hymenostomatida</taxon>
        <taxon>Tetrahymenina</taxon>
        <taxon>Tetrahymenidae</taxon>
        <taxon>Tetrahymena</taxon>
    </lineage>
</organism>